<gene>
    <name type="primary">acyP</name>
    <name type="ordered locus">CE1973</name>
</gene>
<reference key="1">
    <citation type="journal article" date="2003" name="Genome Res.">
        <title>Comparative complete genome sequence analysis of the amino acid replacements responsible for the thermostability of Corynebacterium efficiens.</title>
        <authorList>
            <person name="Nishio Y."/>
            <person name="Nakamura Y."/>
            <person name="Kawarabayasi Y."/>
            <person name="Usuda Y."/>
            <person name="Kimura E."/>
            <person name="Sugimoto S."/>
            <person name="Matsui K."/>
            <person name="Yamagishi A."/>
            <person name="Kikuchi H."/>
            <person name="Ikeo K."/>
            <person name="Gojobori T."/>
        </authorList>
    </citation>
    <scope>NUCLEOTIDE SEQUENCE [LARGE SCALE GENOMIC DNA]</scope>
    <source>
        <strain>DSM 44549 / YS-314 / AJ 12310 / JCM 11189 / NBRC 100395</strain>
    </source>
</reference>
<organism>
    <name type="scientific">Corynebacterium efficiens (strain DSM 44549 / YS-314 / AJ 12310 / JCM 11189 / NBRC 100395)</name>
    <dbReference type="NCBI Taxonomy" id="196164"/>
    <lineage>
        <taxon>Bacteria</taxon>
        <taxon>Bacillati</taxon>
        <taxon>Actinomycetota</taxon>
        <taxon>Actinomycetes</taxon>
        <taxon>Mycobacteriales</taxon>
        <taxon>Corynebacteriaceae</taxon>
        <taxon>Corynebacterium</taxon>
    </lineage>
</organism>
<proteinExistence type="inferred from homology"/>
<keyword id="KW-0378">Hydrolase</keyword>
<keyword id="KW-1185">Reference proteome</keyword>
<comment type="catalytic activity">
    <reaction>
        <text>an acyl phosphate + H2O = a carboxylate + phosphate + H(+)</text>
        <dbReference type="Rhea" id="RHEA:14965"/>
        <dbReference type="ChEBI" id="CHEBI:15377"/>
        <dbReference type="ChEBI" id="CHEBI:15378"/>
        <dbReference type="ChEBI" id="CHEBI:29067"/>
        <dbReference type="ChEBI" id="CHEBI:43474"/>
        <dbReference type="ChEBI" id="CHEBI:59918"/>
        <dbReference type="EC" id="3.6.1.7"/>
    </reaction>
</comment>
<comment type="similarity">
    <text evidence="2">Belongs to the acylphosphatase family.</text>
</comment>
<sequence>MSMQPTDHIRLTAFVHGHVQGVGFRWWTRSQALELGLAGSATNLDDGRVCVVAEGPEDRCRELLTRLGEQPSRHRRVGTVSTVIEQWSEPRGVEGFTER</sequence>
<evidence type="ECO:0000255" key="1">
    <source>
        <dbReference type="PROSITE-ProRule" id="PRU00520"/>
    </source>
</evidence>
<evidence type="ECO:0000305" key="2"/>
<protein>
    <recommendedName>
        <fullName>Acylphosphatase</fullName>
        <ecNumber>3.6.1.7</ecNumber>
    </recommendedName>
    <alternativeName>
        <fullName>Acylphosphate phosphohydrolase</fullName>
    </alternativeName>
</protein>
<accession>Q8FP19</accession>
<feature type="chain" id="PRO_0000326690" description="Acylphosphatase">
    <location>
        <begin position="1"/>
        <end position="99"/>
    </location>
</feature>
<feature type="domain" description="Acylphosphatase-like" evidence="1">
    <location>
        <begin position="10"/>
        <end position="99"/>
    </location>
</feature>
<feature type="active site" evidence="1">
    <location>
        <position position="25"/>
    </location>
</feature>
<feature type="active site" evidence="1">
    <location>
        <position position="43"/>
    </location>
</feature>
<name>ACYP_COREF</name>
<dbReference type="EC" id="3.6.1.7"/>
<dbReference type="EMBL" id="BA000035">
    <property type="protein sequence ID" value="BAC18783.1"/>
    <property type="molecule type" value="Genomic_DNA"/>
</dbReference>
<dbReference type="RefSeq" id="WP_006767970.1">
    <property type="nucleotide sequence ID" value="NC_004369.1"/>
</dbReference>
<dbReference type="SMR" id="Q8FP19"/>
<dbReference type="STRING" id="196164.gene:10742401"/>
<dbReference type="KEGG" id="cef:CE1973"/>
<dbReference type="eggNOG" id="COG1254">
    <property type="taxonomic scope" value="Bacteria"/>
</dbReference>
<dbReference type="HOGENOM" id="CLU_141932_3_0_11"/>
<dbReference type="OrthoDB" id="3182027at2"/>
<dbReference type="Proteomes" id="UP000001409">
    <property type="component" value="Chromosome"/>
</dbReference>
<dbReference type="GO" id="GO:0003998">
    <property type="term" value="F:acylphosphatase activity"/>
    <property type="evidence" value="ECO:0007669"/>
    <property type="project" value="UniProtKB-EC"/>
</dbReference>
<dbReference type="Gene3D" id="3.30.70.100">
    <property type="match status" value="1"/>
</dbReference>
<dbReference type="InterPro" id="IPR020456">
    <property type="entry name" value="Acylphosphatase"/>
</dbReference>
<dbReference type="InterPro" id="IPR001792">
    <property type="entry name" value="Acylphosphatase-like_dom"/>
</dbReference>
<dbReference type="InterPro" id="IPR036046">
    <property type="entry name" value="Acylphosphatase-like_dom_sf"/>
</dbReference>
<dbReference type="InterPro" id="IPR017968">
    <property type="entry name" value="Acylphosphatase_CS"/>
</dbReference>
<dbReference type="NCBIfam" id="NF010997">
    <property type="entry name" value="PRK14422.1"/>
    <property type="match status" value="1"/>
</dbReference>
<dbReference type="PANTHER" id="PTHR47268">
    <property type="entry name" value="ACYLPHOSPHATASE"/>
    <property type="match status" value="1"/>
</dbReference>
<dbReference type="PANTHER" id="PTHR47268:SF4">
    <property type="entry name" value="ACYLPHOSPHATASE"/>
    <property type="match status" value="1"/>
</dbReference>
<dbReference type="Pfam" id="PF00708">
    <property type="entry name" value="Acylphosphatase"/>
    <property type="match status" value="1"/>
</dbReference>
<dbReference type="SUPFAM" id="SSF54975">
    <property type="entry name" value="Acylphosphatase/BLUF domain-like"/>
    <property type="match status" value="1"/>
</dbReference>
<dbReference type="PROSITE" id="PS00150">
    <property type="entry name" value="ACYLPHOSPHATASE_1"/>
    <property type="match status" value="1"/>
</dbReference>
<dbReference type="PROSITE" id="PS51160">
    <property type="entry name" value="ACYLPHOSPHATASE_3"/>
    <property type="match status" value="1"/>
</dbReference>